<accession>Q17QK8</accession>
<accession>A7YKV0</accession>
<sequence>MEGSVGKVGGLGRTLCVLTGASRGFGRTLAQVLAPLMSPRSVLVLSARNDEALRQLETELGAEWPGLRIVRVPADLGAETGLQQLVGALCDLPRPEGLQRVLLINNAGTLGDVSKRWVDLTDPTEVNNYWTLNLTSTLCLTSSILQAFPDSPGLSRTVVNISSICALQPFKGWGLYCAGKAARNMMFQVLAAEEPSVRVLSYGPGPLDTDMQQLARETSVDPDLRKSLQELKRKGELVDCKISAQKLLSLLQNDKFESGAHIDFYDE</sequence>
<dbReference type="EC" id="1.1.1.153"/>
<dbReference type="EMBL" id="DQ978331">
    <property type="protein sequence ID" value="ABI79460.1"/>
    <property type="molecule type" value="mRNA"/>
</dbReference>
<dbReference type="EMBL" id="BC118299">
    <property type="protein sequence ID" value="AAI18300.1"/>
    <property type="molecule type" value="mRNA"/>
</dbReference>
<dbReference type="RefSeq" id="NP_001069471.1">
    <property type="nucleotide sequence ID" value="NM_001076003.1"/>
</dbReference>
<dbReference type="SMR" id="Q17QK8"/>
<dbReference type="FunCoup" id="Q17QK8">
    <property type="interactions" value="403"/>
</dbReference>
<dbReference type="STRING" id="9913.ENSBTAP00000064495"/>
<dbReference type="PaxDb" id="9913-ENSBTAP00000029280"/>
<dbReference type="GeneID" id="533836"/>
<dbReference type="KEGG" id="bta:533836"/>
<dbReference type="CTD" id="6697"/>
<dbReference type="eggNOG" id="KOG1204">
    <property type="taxonomic scope" value="Eukaryota"/>
</dbReference>
<dbReference type="HOGENOM" id="CLU_010194_2_11_1"/>
<dbReference type="InParanoid" id="Q17QK8"/>
<dbReference type="OrthoDB" id="153074at2759"/>
<dbReference type="TreeFam" id="TF326358"/>
<dbReference type="BRENDA" id="1.1.1.153">
    <property type="organism ID" value="908"/>
</dbReference>
<dbReference type="Proteomes" id="UP000009136">
    <property type="component" value="Unplaced"/>
</dbReference>
<dbReference type="GO" id="GO:0005737">
    <property type="term" value="C:cytoplasm"/>
    <property type="evidence" value="ECO:0007669"/>
    <property type="project" value="UniProtKB-SubCell"/>
</dbReference>
<dbReference type="GO" id="GO:0004757">
    <property type="term" value="F:sepiapterin reductase (NADP+) activity"/>
    <property type="evidence" value="ECO:0000250"/>
    <property type="project" value="UniProtKB"/>
</dbReference>
<dbReference type="GO" id="GO:0006729">
    <property type="term" value="P:tetrahydrobiopterin biosynthetic process"/>
    <property type="evidence" value="ECO:0000318"/>
    <property type="project" value="GO_Central"/>
</dbReference>
<dbReference type="CDD" id="cd05367">
    <property type="entry name" value="SPR-like_SDR_c"/>
    <property type="match status" value="1"/>
</dbReference>
<dbReference type="FunFam" id="3.40.50.720:FF:000259">
    <property type="entry name" value="Sepiapterin reductase"/>
    <property type="match status" value="1"/>
</dbReference>
<dbReference type="Gene3D" id="3.40.50.720">
    <property type="entry name" value="NAD(P)-binding Rossmann-like Domain"/>
    <property type="match status" value="1"/>
</dbReference>
<dbReference type="InterPro" id="IPR051721">
    <property type="entry name" value="Biopterin_syn/organic_redct"/>
</dbReference>
<dbReference type="InterPro" id="IPR036291">
    <property type="entry name" value="NAD(P)-bd_dom_sf"/>
</dbReference>
<dbReference type="InterPro" id="IPR002347">
    <property type="entry name" value="SDR_fam"/>
</dbReference>
<dbReference type="InterPro" id="IPR006393">
    <property type="entry name" value="Sepiapterin_red"/>
</dbReference>
<dbReference type="NCBIfam" id="TIGR01500">
    <property type="entry name" value="sepiapter_red"/>
    <property type="match status" value="1"/>
</dbReference>
<dbReference type="PANTHER" id="PTHR44085">
    <property type="entry name" value="SEPIAPTERIN REDUCTASE"/>
    <property type="match status" value="1"/>
</dbReference>
<dbReference type="PANTHER" id="PTHR44085:SF2">
    <property type="entry name" value="SEPIAPTERIN REDUCTASE"/>
    <property type="match status" value="1"/>
</dbReference>
<dbReference type="Pfam" id="PF00106">
    <property type="entry name" value="adh_short"/>
    <property type="match status" value="1"/>
</dbReference>
<dbReference type="PRINTS" id="PR00081">
    <property type="entry name" value="GDHRDH"/>
</dbReference>
<dbReference type="SUPFAM" id="SSF51735">
    <property type="entry name" value="NAD(P)-binding Rossmann-fold domains"/>
    <property type="match status" value="1"/>
</dbReference>
<evidence type="ECO:0000250" key="1"/>
<evidence type="ECO:0000250" key="2">
    <source>
        <dbReference type="UniProtKB" id="P18297"/>
    </source>
</evidence>
<evidence type="ECO:0000250" key="3">
    <source>
        <dbReference type="UniProtKB" id="P35270"/>
    </source>
</evidence>
<evidence type="ECO:0000305" key="4"/>
<comment type="function">
    <text evidence="1">Catalyzes the final one or two reductions in tetra-hydrobiopterin biosynthesis to form 5,6,7,8-tetrahydrobiopterin.</text>
</comment>
<comment type="catalytic activity">
    <reaction>
        <text>L-erythro-7,8-dihydrobiopterin + NADP(+) = L-sepiapterin + NADPH + H(+)</text>
        <dbReference type="Rhea" id="RHEA:18953"/>
        <dbReference type="ChEBI" id="CHEBI:15378"/>
        <dbReference type="ChEBI" id="CHEBI:43029"/>
        <dbReference type="ChEBI" id="CHEBI:57783"/>
        <dbReference type="ChEBI" id="CHEBI:58349"/>
        <dbReference type="ChEBI" id="CHEBI:194527"/>
        <dbReference type="EC" id="1.1.1.153"/>
    </reaction>
</comment>
<comment type="catalytic activity">
    <reaction>
        <text>(6R)-L-erythro-5,6,7,8-tetrahydrobiopterin + 2 NADP(+) = 6-pyruvoyl-5,6,7,8-tetrahydropterin + 2 NADPH + 2 H(+)</text>
        <dbReference type="Rhea" id="RHEA:32627"/>
        <dbReference type="ChEBI" id="CHEBI:15378"/>
        <dbReference type="ChEBI" id="CHEBI:57783"/>
        <dbReference type="ChEBI" id="CHEBI:58349"/>
        <dbReference type="ChEBI" id="CHEBI:59560"/>
        <dbReference type="ChEBI" id="CHEBI:136564"/>
        <dbReference type="EC" id="1.1.1.153"/>
    </reaction>
</comment>
<comment type="subunit">
    <text evidence="1">Homodimer.</text>
</comment>
<comment type="subcellular location">
    <subcellularLocation>
        <location evidence="1">Cytoplasm</location>
    </subcellularLocation>
</comment>
<comment type="similarity">
    <text evidence="4">Belongs to the sepiapterin reductase family.</text>
</comment>
<proteinExistence type="evidence at transcript level"/>
<name>SPRE_BOVIN</name>
<gene>
    <name type="primary">SPR</name>
</gene>
<protein>
    <recommendedName>
        <fullName>Sepiapterin reductase</fullName>
        <shortName>SPR</shortName>
        <ecNumber>1.1.1.153</ecNumber>
    </recommendedName>
</protein>
<feature type="chain" id="PRO_0000327641" description="Sepiapterin reductase">
    <location>
        <begin position="1"/>
        <end position="267"/>
    </location>
</feature>
<feature type="binding site" evidence="1">
    <location>
        <begin position="20"/>
        <end position="26"/>
    </location>
    <ligand>
        <name>NADP(+)</name>
        <dbReference type="ChEBI" id="CHEBI:58349"/>
    </ligand>
</feature>
<feature type="binding site" evidence="1">
    <location>
        <begin position="48"/>
        <end position="49"/>
    </location>
    <ligand>
        <name>NADP(+)</name>
        <dbReference type="ChEBI" id="CHEBI:58349"/>
    </ligand>
</feature>
<feature type="binding site" evidence="1">
    <location>
        <begin position="75"/>
        <end position="76"/>
    </location>
    <ligand>
        <name>NADP(+)</name>
        <dbReference type="ChEBI" id="CHEBI:58349"/>
    </ligand>
</feature>
<feature type="binding site" evidence="1">
    <location>
        <begin position="163"/>
        <end position="164"/>
    </location>
    <ligand>
        <name>substrate</name>
    </ligand>
</feature>
<feature type="binding site" evidence="1">
    <location>
        <position position="176"/>
    </location>
    <ligand>
        <name>substrate</name>
    </ligand>
</feature>
<feature type="binding site" evidence="1">
    <location>
        <position position="180"/>
    </location>
    <ligand>
        <name>NADP(+)</name>
        <dbReference type="ChEBI" id="CHEBI:58349"/>
    </ligand>
</feature>
<feature type="binding site" evidence="1">
    <location>
        <position position="205"/>
    </location>
    <ligand>
        <name>substrate</name>
    </ligand>
</feature>
<feature type="binding site" evidence="1">
    <location>
        <begin position="207"/>
        <end position="212"/>
    </location>
    <ligand>
        <name>NADP(+)</name>
        <dbReference type="ChEBI" id="CHEBI:58349"/>
    </ligand>
</feature>
<feature type="binding site" evidence="1">
    <location>
        <position position="263"/>
    </location>
    <ligand>
        <name>substrate</name>
    </ligand>
</feature>
<feature type="modified residue" description="N-acetylmethionine" evidence="2">
    <location>
        <position position="1"/>
    </location>
</feature>
<feature type="modified residue" description="Phosphoserine" evidence="2">
    <location>
        <position position="38"/>
    </location>
</feature>
<feature type="modified residue" description="Phosphoserine" evidence="2">
    <location>
        <position position="201"/>
    </location>
</feature>
<feature type="modified residue" description="Phosphoserine" evidence="3">
    <location>
        <position position="219"/>
    </location>
</feature>
<feature type="sequence conflict" description="In Ref. 1; ABI79460." evidence="4" ref="1">
    <original>E</original>
    <variation>Q</variation>
    <location>
        <position position="236"/>
    </location>
</feature>
<organism>
    <name type="scientific">Bos taurus</name>
    <name type="common">Bovine</name>
    <dbReference type="NCBI Taxonomy" id="9913"/>
    <lineage>
        <taxon>Eukaryota</taxon>
        <taxon>Metazoa</taxon>
        <taxon>Chordata</taxon>
        <taxon>Craniata</taxon>
        <taxon>Vertebrata</taxon>
        <taxon>Euteleostomi</taxon>
        <taxon>Mammalia</taxon>
        <taxon>Eutheria</taxon>
        <taxon>Laurasiatheria</taxon>
        <taxon>Artiodactyla</taxon>
        <taxon>Ruminantia</taxon>
        <taxon>Pecora</taxon>
        <taxon>Bovidae</taxon>
        <taxon>Bovinae</taxon>
        <taxon>Bos</taxon>
    </lineage>
</organism>
<keyword id="KW-0007">Acetylation</keyword>
<keyword id="KW-0963">Cytoplasm</keyword>
<keyword id="KW-0521">NADP</keyword>
<keyword id="KW-0560">Oxidoreductase</keyword>
<keyword id="KW-0597">Phosphoprotein</keyword>
<keyword id="KW-1185">Reference proteome</keyword>
<reference key="1">
    <citation type="submission" date="2006-08" db="EMBL/GenBank/DDBJ databases">
        <title>Cloning and sequencing of cDNA encoding bovine sepiapterin reductase isoform 2.</title>
        <authorList>
            <person name="Pung Y.F."/>
            <person name="Cai H."/>
        </authorList>
    </citation>
    <scope>NUCLEOTIDE SEQUENCE [MRNA]</scope>
</reference>
<reference key="2">
    <citation type="submission" date="2006-06" db="EMBL/GenBank/DDBJ databases">
        <authorList>
            <consortium name="NIH - Mammalian Gene Collection (MGC) project"/>
        </authorList>
    </citation>
    <scope>NUCLEOTIDE SEQUENCE [LARGE SCALE MRNA]</scope>
    <source>
        <strain>Hereford</strain>
        <tissue>Basal ganglia</tissue>
    </source>
</reference>